<organism>
    <name type="scientific">Methanococcus maripaludis (strain DSM 14266 / JCM 13030 / NBRC 101832 / S2 / LL)</name>
    <dbReference type="NCBI Taxonomy" id="267377"/>
    <lineage>
        <taxon>Archaea</taxon>
        <taxon>Methanobacteriati</taxon>
        <taxon>Methanobacteriota</taxon>
        <taxon>Methanomada group</taxon>
        <taxon>Methanococci</taxon>
        <taxon>Methanococcales</taxon>
        <taxon>Methanococcaceae</taxon>
        <taxon>Methanococcus</taxon>
    </lineage>
</organism>
<gene>
    <name evidence="1" type="primary">dcd</name>
    <name type="ordered locus">MMP1426</name>
</gene>
<accession>Q6LXC6</accession>
<feature type="chain" id="PRO_0000156031" description="dCTP deaminase, dUMP-forming">
    <location>
        <begin position="1"/>
        <end position="206"/>
    </location>
</feature>
<feature type="active site" description="Proton donor/acceptor" evidence="1">
    <location>
        <position position="145"/>
    </location>
</feature>
<feature type="binding site" evidence="1">
    <location>
        <begin position="117"/>
        <end position="122"/>
    </location>
    <ligand>
        <name>dCTP</name>
        <dbReference type="ChEBI" id="CHEBI:61481"/>
    </ligand>
</feature>
<feature type="binding site" evidence="1">
    <location>
        <position position="135"/>
    </location>
    <ligand>
        <name>dCTP</name>
        <dbReference type="ChEBI" id="CHEBI:61481"/>
    </ligand>
</feature>
<feature type="binding site" evidence="1">
    <location>
        <begin position="143"/>
        <end position="145"/>
    </location>
    <ligand>
        <name>dCTP</name>
        <dbReference type="ChEBI" id="CHEBI:61481"/>
    </ligand>
</feature>
<feature type="binding site" evidence="1">
    <location>
        <position position="163"/>
    </location>
    <ligand>
        <name>dCTP</name>
        <dbReference type="ChEBI" id="CHEBI:61481"/>
    </ligand>
</feature>
<feature type="binding site" evidence="1">
    <location>
        <position position="177"/>
    </location>
    <ligand>
        <name>dCTP</name>
        <dbReference type="ChEBI" id="CHEBI:61481"/>
    </ligand>
</feature>
<feature type="binding site" evidence="1">
    <location>
        <position position="184"/>
    </location>
    <ligand>
        <name>dCTP</name>
        <dbReference type="ChEBI" id="CHEBI:61481"/>
    </ligand>
</feature>
<feature type="binding site" evidence="1">
    <location>
        <position position="188"/>
    </location>
    <ligand>
        <name>dCTP</name>
        <dbReference type="ChEBI" id="CHEBI:61481"/>
    </ligand>
</feature>
<feature type="site" description="Important for bifunctional activity" evidence="1">
    <location>
        <begin position="132"/>
        <end position="133"/>
    </location>
</feature>
<dbReference type="EC" id="3.5.4.30" evidence="1"/>
<dbReference type="EMBL" id="BX950229">
    <property type="protein sequence ID" value="CAF30982.1"/>
    <property type="molecule type" value="Genomic_DNA"/>
</dbReference>
<dbReference type="RefSeq" id="WP_011171370.1">
    <property type="nucleotide sequence ID" value="NC_005791.1"/>
</dbReference>
<dbReference type="SMR" id="Q6LXC6"/>
<dbReference type="STRING" id="267377.MMP1426"/>
<dbReference type="EnsemblBacteria" id="CAF30982">
    <property type="protein sequence ID" value="CAF30982"/>
    <property type="gene ID" value="MMP1426"/>
</dbReference>
<dbReference type="GeneID" id="2761835"/>
<dbReference type="KEGG" id="mmp:MMP1426"/>
<dbReference type="PATRIC" id="fig|267377.15.peg.1462"/>
<dbReference type="eggNOG" id="arCOG04048">
    <property type="taxonomic scope" value="Archaea"/>
</dbReference>
<dbReference type="HOGENOM" id="CLU_087476_2_1_2"/>
<dbReference type="OrthoDB" id="33242at2157"/>
<dbReference type="UniPathway" id="UPA00610">
    <property type="reaction ID" value="UER00667"/>
</dbReference>
<dbReference type="Proteomes" id="UP000000590">
    <property type="component" value="Chromosome"/>
</dbReference>
<dbReference type="GO" id="GO:0033973">
    <property type="term" value="F:dCTP deaminase (dUMP-forming) activity"/>
    <property type="evidence" value="ECO:0007669"/>
    <property type="project" value="UniProtKB-UniRule"/>
</dbReference>
<dbReference type="GO" id="GO:0008829">
    <property type="term" value="F:dCTP deaminase activity"/>
    <property type="evidence" value="ECO:0007669"/>
    <property type="project" value="InterPro"/>
</dbReference>
<dbReference type="GO" id="GO:0000166">
    <property type="term" value="F:nucleotide binding"/>
    <property type="evidence" value="ECO:0007669"/>
    <property type="project" value="UniProtKB-KW"/>
</dbReference>
<dbReference type="GO" id="GO:0006226">
    <property type="term" value="P:dUMP biosynthetic process"/>
    <property type="evidence" value="ECO:0007669"/>
    <property type="project" value="UniProtKB-UniRule"/>
</dbReference>
<dbReference type="GO" id="GO:0006229">
    <property type="term" value="P:dUTP biosynthetic process"/>
    <property type="evidence" value="ECO:0007669"/>
    <property type="project" value="InterPro"/>
</dbReference>
<dbReference type="CDD" id="cd07557">
    <property type="entry name" value="trimeric_dUTPase"/>
    <property type="match status" value="1"/>
</dbReference>
<dbReference type="Gene3D" id="2.70.40.10">
    <property type="match status" value="1"/>
</dbReference>
<dbReference type="HAMAP" id="MF_00146">
    <property type="entry name" value="dCTP_deaminase"/>
    <property type="match status" value="1"/>
</dbReference>
<dbReference type="InterPro" id="IPR011962">
    <property type="entry name" value="dCTP_deaminase"/>
</dbReference>
<dbReference type="InterPro" id="IPR036157">
    <property type="entry name" value="dUTPase-like_sf"/>
</dbReference>
<dbReference type="InterPro" id="IPR033704">
    <property type="entry name" value="dUTPase_trimeric"/>
</dbReference>
<dbReference type="NCBIfam" id="TIGR02274">
    <property type="entry name" value="dCTP_deam"/>
    <property type="match status" value="1"/>
</dbReference>
<dbReference type="PANTHER" id="PTHR42680">
    <property type="entry name" value="DCTP DEAMINASE"/>
    <property type="match status" value="1"/>
</dbReference>
<dbReference type="PANTHER" id="PTHR42680:SF3">
    <property type="entry name" value="DCTP DEAMINASE"/>
    <property type="match status" value="1"/>
</dbReference>
<dbReference type="Pfam" id="PF22769">
    <property type="entry name" value="DCD"/>
    <property type="match status" value="1"/>
</dbReference>
<dbReference type="SUPFAM" id="SSF51283">
    <property type="entry name" value="dUTPase-like"/>
    <property type="match status" value="1"/>
</dbReference>
<protein>
    <recommendedName>
        <fullName evidence="1">dCTP deaminase, dUMP-forming</fullName>
        <ecNumber evidence="1">3.5.4.30</ecNumber>
    </recommendedName>
    <alternativeName>
        <fullName evidence="1">Bifunctional dCTP deaminase:dUTPase</fullName>
    </alternativeName>
    <alternativeName>
        <fullName evidence="1">DCD-DUT</fullName>
    </alternativeName>
</protein>
<comment type="function">
    <text evidence="1">Bifunctional enzyme that catalyzes both the deamination of dCTP to dUTP and the hydrolysis of dUTP to dUMP without releasing the toxic dUTP intermediate.</text>
</comment>
<comment type="catalytic activity">
    <reaction evidence="1">
        <text>dCTP + 2 H2O = dUMP + NH4(+) + diphosphate</text>
        <dbReference type="Rhea" id="RHEA:19205"/>
        <dbReference type="ChEBI" id="CHEBI:15377"/>
        <dbReference type="ChEBI" id="CHEBI:28938"/>
        <dbReference type="ChEBI" id="CHEBI:33019"/>
        <dbReference type="ChEBI" id="CHEBI:61481"/>
        <dbReference type="ChEBI" id="CHEBI:246422"/>
        <dbReference type="EC" id="3.5.4.30"/>
    </reaction>
</comment>
<comment type="pathway">
    <text evidence="1">Pyrimidine metabolism; dUMP biosynthesis; dUMP from dCTP: step 1/1.</text>
</comment>
<comment type="subunit">
    <text evidence="1">Homotrimer.</text>
</comment>
<comment type="similarity">
    <text evidence="1">Belongs to the dCTP deaminase family.</text>
</comment>
<proteinExistence type="inferred from homology"/>
<name>DCDB_METMP</name>
<sequence>MILSDKDIFNYVTSKRVLIEPFNSKFVGPCSYDVTLGSEFIKYNEDVYDVKKTLNHSKFKIENSVMVCPLNHHLDETIIKNYKEKYNVDCVVSGGLLGTTNEYVELPNDVCAQYQGRSSFGRVFLQTHQTAGWIDSGFKGKITLEIVAYDKPVILYKNQRVGQLIFSKTLSPADIGYSDRKCSKYAGQTSVMASLIKKDFETNEEE</sequence>
<keyword id="KW-0378">Hydrolase</keyword>
<keyword id="KW-0546">Nucleotide metabolism</keyword>
<keyword id="KW-0547">Nucleotide-binding</keyword>
<keyword id="KW-1185">Reference proteome</keyword>
<evidence type="ECO:0000255" key="1">
    <source>
        <dbReference type="HAMAP-Rule" id="MF_00146"/>
    </source>
</evidence>
<reference key="1">
    <citation type="journal article" date="2004" name="J. Bacteriol.">
        <title>Complete genome sequence of the genetically tractable hydrogenotrophic methanogen Methanococcus maripaludis.</title>
        <authorList>
            <person name="Hendrickson E.L."/>
            <person name="Kaul R."/>
            <person name="Zhou Y."/>
            <person name="Bovee D."/>
            <person name="Chapman P."/>
            <person name="Chung J."/>
            <person name="Conway de Macario E."/>
            <person name="Dodsworth J.A."/>
            <person name="Gillett W."/>
            <person name="Graham D.E."/>
            <person name="Hackett M."/>
            <person name="Haydock A.K."/>
            <person name="Kang A."/>
            <person name="Land M.L."/>
            <person name="Levy R."/>
            <person name="Lie T.J."/>
            <person name="Major T.A."/>
            <person name="Moore B.C."/>
            <person name="Porat I."/>
            <person name="Palmeiri A."/>
            <person name="Rouse G."/>
            <person name="Saenphimmachak C."/>
            <person name="Soell D."/>
            <person name="Van Dien S."/>
            <person name="Wang T."/>
            <person name="Whitman W.B."/>
            <person name="Xia Q."/>
            <person name="Zhang Y."/>
            <person name="Larimer F.W."/>
            <person name="Olson M.V."/>
            <person name="Leigh J.A."/>
        </authorList>
    </citation>
    <scope>NUCLEOTIDE SEQUENCE [LARGE SCALE GENOMIC DNA]</scope>
    <source>
        <strain>DSM 14266 / JCM 13030 / NBRC 101832 / S2 / LL</strain>
    </source>
</reference>